<keyword id="KW-0119">Carbohydrate metabolism</keyword>
<keyword id="KW-0378">Hydrolase</keyword>
<keyword id="KW-1185">Reference proteome</keyword>
<organism>
    <name type="scientific">Clostridium acetobutylicum (strain ATCC 824 / DSM 792 / JCM 1419 / IAM 19013 / LMG 5710 / NBRC 13948 / NRRL B-527 / VKM B-1787 / 2291 / W)</name>
    <dbReference type="NCBI Taxonomy" id="272562"/>
    <lineage>
        <taxon>Bacteria</taxon>
        <taxon>Bacillati</taxon>
        <taxon>Bacillota</taxon>
        <taxon>Clostridia</taxon>
        <taxon>Eubacteriales</taxon>
        <taxon>Clostridiaceae</taxon>
        <taxon>Clostridium</taxon>
    </lineage>
</organism>
<dbReference type="EC" id="3.5.99.6" evidence="1"/>
<dbReference type="EMBL" id="AE001437">
    <property type="protein sequence ID" value="AAK78169.1"/>
    <property type="molecule type" value="Genomic_DNA"/>
</dbReference>
<dbReference type="PIR" id="F96922">
    <property type="entry name" value="F96922"/>
</dbReference>
<dbReference type="RefSeq" id="NP_346829.1">
    <property type="nucleotide sequence ID" value="NC_003030.1"/>
</dbReference>
<dbReference type="RefSeq" id="WP_010963511.1">
    <property type="nucleotide sequence ID" value="NC_003030.1"/>
</dbReference>
<dbReference type="SMR" id="Q97MK9"/>
<dbReference type="STRING" id="272562.CA_C0187"/>
<dbReference type="GeneID" id="44996679"/>
<dbReference type="KEGG" id="cac:CA_C0187"/>
<dbReference type="PATRIC" id="fig|272562.8.peg.373"/>
<dbReference type="eggNOG" id="COG0363">
    <property type="taxonomic scope" value="Bacteria"/>
</dbReference>
<dbReference type="HOGENOM" id="CLU_049611_1_1_9"/>
<dbReference type="OrthoDB" id="9791139at2"/>
<dbReference type="UniPathway" id="UPA00629">
    <property type="reaction ID" value="UER00684"/>
</dbReference>
<dbReference type="Proteomes" id="UP000000814">
    <property type="component" value="Chromosome"/>
</dbReference>
<dbReference type="GO" id="GO:0005737">
    <property type="term" value="C:cytoplasm"/>
    <property type="evidence" value="ECO:0007669"/>
    <property type="project" value="TreeGrafter"/>
</dbReference>
<dbReference type="GO" id="GO:0004342">
    <property type="term" value="F:glucosamine-6-phosphate deaminase activity"/>
    <property type="evidence" value="ECO:0007669"/>
    <property type="project" value="UniProtKB-UniRule"/>
</dbReference>
<dbReference type="GO" id="GO:0042802">
    <property type="term" value="F:identical protein binding"/>
    <property type="evidence" value="ECO:0007669"/>
    <property type="project" value="TreeGrafter"/>
</dbReference>
<dbReference type="GO" id="GO:0005975">
    <property type="term" value="P:carbohydrate metabolic process"/>
    <property type="evidence" value="ECO:0007669"/>
    <property type="project" value="InterPro"/>
</dbReference>
<dbReference type="GO" id="GO:0006043">
    <property type="term" value="P:glucosamine catabolic process"/>
    <property type="evidence" value="ECO:0007669"/>
    <property type="project" value="TreeGrafter"/>
</dbReference>
<dbReference type="GO" id="GO:0006046">
    <property type="term" value="P:N-acetylglucosamine catabolic process"/>
    <property type="evidence" value="ECO:0007669"/>
    <property type="project" value="TreeGrafter"/>
</dbReference>
<dbReference type="GO" id="GO:0019262">
    <property type="term" value="P:N-acetylneuraminate catabolic process"/>
    <property type="evidence" value="ECO:0007669"/>
    <property type="project" value="UniProtKB-UniRule"/>
</dbReference>
<dbReference type="CDD" id="cd01399">
    <property type="entry name" value="GlcN6P_deaminase"/>
    <property type="match status" value="1"/>
</dbReference>
<dbReference type="FunFam" id="3.40.50.1360:FF:000003">
    <property type="entry name" value="Glucosamine-6-phosphate deaminase"/>
    <property type="match status" value="1"/>
</dbReference>
<dbReference type="Gene3D" id="3.40.50.1360">
    <property type="match status" value="1"/>
</dbReference>
<dbReference type="HAMAP" id="MF_01241">
    <property type="entry name" value="GlcN6P_deamin"/>
    <property type="match status" value="1"/>
</dbReference>
<dbReference type="InterPro" id="IPR006148">
    <property type="entry name" value="Glc/Gal-6P_isomerase"/>
</dbReference>
<dbReference type="InterPro" id="IPR004547">
    <property type="entry name" value="Glucosamine6P_isomerase"/>
</dbReference>
<dbReference type="InterPro" id="IPR018321">
    <property type="entry name" value="Glucosamine6P_isomerase_CS"/>
</dbReference>
<dbReference type="InterPro" id="IPR037171">
    <property type="entry name" value="NagB/RpiA_transferase-like"/>
</dbReference>
<dbReference type="NCBIfam" id="TIGR00502">
    <property type="entry name" value="nagB"/>
    <property type="match status" value="1"/>
</dbReference>
<dbReference type="NCBIfam" id="NF001684">
    <property type="entry name" value="PRK00443.1-4"/>
    <property type="match status" value="1"/>
</dbReference>
<dbReference type="PANTHER" id="PTHR11280">
    <property type="entry name" value="GLUCOSAMINE-6-PHOSPHATE ISOMERASE"/>
    <property type="match status" value="1"/>
</dbReference>
<dbReference type="PANTHER" id="PTHR11280:SF5">
    <property type="entry name" value="GLUCOSAMINE-6-PHOSPHATE ISOMERASE"/>
    <property type="match status" value="1"/>
</dbReference>
<dbReference type="Pfam" id="PF01182">
    <property type="entry name" value="Glucosamine_iso"/>
    <property type="match status" value="1"/>
</dbReference>
<dbReference type="SUPFAM" id="SSF100950">
    <property type="entry name" value="NagB/RpiA/CoA transferase-like"/>
    <property type="match status" value="1"/>
</dbReference>
<dbReference type="PROSITE" id="PS01161">
    <property type="entry name" value="GLC_GALNAC_ISOMERASE"/>
    <property type="match status" value="1"/>
</dbReference>
<comment type="function">
    <text evidence="1">Catalyzes the reversible isomerization-deamination of glucosamine 6-phosphate (GlcN6P) to form fructose 6-phosphate (Fru6P) and ammonium ion.</text>
</comment>
<comment type="catalytic activity">
    <reaction evidence="1">
        <text>alpha-D-glucosamine 6-phosphate + H2O = beta-D-fructose 6-phosphate + NH4(+)</text>
        <dbReference type="Rhea" id="RHEA:12172"/>
        <dbReference type="ChEBI" id="CHEBI:15377"/>
        <dbReference type="ChEBI" id="CHEBI:28938"/>
        <dbReference type="ChEBI" id="CHEBI:57634"/>
        <dbReference type="ChEBI" id="CHEBI:75989"/>
        <dbReference type="EC" id="3.5.99.6"/>
    </reaction>
</comment>
<comment type="pathway">
    <text evidence="1">Amino-sugar metabolism; N-acetylneuraminate degradation; D-fructose 6-phosphate from N-acetylneuraminate: step 5/5.</text>
</comment>
<comment type="similarity">
    <text evidence="1">Belongs to the glucosamine/galactosamine-6-phosphate isomerase family. NagB subfamily.</text>
</comment>
<accession>Q97MK9</accession>
<feature type="chain" id="PRO_0000160138" description="Glucosamine-6-phosphate deaminase">
    <location>
        <begin position="1"/>
        <end position="241"/>
    </location>
</feature>
<feature type="active site" description="Proton acceptor; for enolization step" evidence="1">
    <location>
        <position position="67"/>
    </location>
</feature>
<feature type="active site" description="For ring-opening step" evidence="1">
    <location>
        <position position="136"/>
    </location>
</feature>
<feature type="active site" description="Proton acceptor; for ring-opening step" evidence="1">
    <location>
        <position position="138"/>
    </location>
</feature>
<feature type="active site" description="For ring-opening step" evidence="1">
    <location>
        <position position="143"/>
    </location>
</feature>
<protein>
    <recommendedName>
        <fullName evidence="1">Glucosamine-6-phosphate deaminase</fullName>
        <ecNumber evidence="1">3.5.99.6</ecNumber>
    </recommendedName>
    <alternativeName>
        <fullName evidence="1">GlcN6P deaminase</fullName>
        <shortName evidence="1">GNPDA</shortName>
    </alternativeName>
    <alternativeName>
        <fullName evidence="1">Glucosamine-6-phosphate isomerase</fullName>
    </alternativeName>
</protein>
<evidence type="ECO:0000255" key="1">
    <source>
        <dbReference type="HAMAP-Rule" id="MF_01241"/>
    </source>
</evidence>
<sequence>MKIVTVNDYDEMSKFAAKIIASQIILKENSVLGLATGGTPLGMYKELINLYNKENLNFSKVQTFNLDEYYGVSDDNPQSYHYYMKNNFFKFTNIKNENINILDGTTSDIENECKSYDNKILSSGGIDIQVLGIGENGHIGFNEPDINFEAKTHLVKLDEKTIEANSRFFNSKNEVPTSALSMGIKTIMQSKKILLLANGEKKAEAIFKMVNGKISPEVPASILQLHNDTTIIIDKAAAKML</sequence>
<reference key="1">
    <citation type="journal article" date="2001" name="J. Bacteriol.">
        <title>Genome sequence and comparative analysis of the solvent-producing bacterium Clostridium acetobutylicum.</title>
        <authorList>
            <person name="Noelling J."/>
            <person name="Breton G."/>
            <person name="Omelchenko M.V."/>
            <person name="Makarova K.S."/>
            <person name="Zeng Q."/>
            <person name="Gibson R."/>
            <person name="Lee H.M."/>
            <person name="Dubois J."/>
            <person name="Qiu D."/>
            <person name="Hitti J."/>
            <person name="Wolf Y.I."/>
            <person name="Tatusov R.L."/>
            <person name="Sabathe F."/>
            <person name="Doucette-Stamm L.A."/>
            <person name="Soucaille P."/>
            <person name="Daly M.J."/>
            <person name="Bennett G.N."/>
            <person name="Koonin E.V."/>
            <person name="Smith D.R."/>
        </authorList>
    </citation>
    <scope>NUCLEOTIDE SEQUENCE [LARGE SCALE GENOMIC DNA]</scope>
    <source>
        <strain>ATCC 824 / DSM 792 / JCM 1419 / IAM 19013 / LMG 5710 / NBRC 13948 / NRRL B-527 / VKM B-1787 / 2291 / W</strain>
    </source>
</reference>
<proteinExistence type="inferred from homology"/>
<gene>
    <name evidence="1" type="primary">nagB</name>
    <name type="ordered locus">CA_C0187</name>
</gene>
<name>NAGB_CLOAB</name>